<dbReference type="EMBL" id="CP000941">
    <property type="protein sequence ID" value="ACA12508.1"/>
    <property type="molecule type" value="Genomic_DNA"/>
</dbReference>
<dbReference type="SMR" id="B0U3S9"/>
<dbReference type="KEGG" id="xfm:Xfasm12_1599"/>
<dbReference type="HOGENOM" id="CLU_135723_3_3_6"/>
<dbReference type="GO" id="GO:1990904">
    <property type="term" value="C:ribonucleoprotein complex"/>
    <property type="evidence" value="ECO:0007669"/>
    <property type="project" value="UniProtKB-KW"/>
</dbReference>
<dbReference type="GO" id="GO:0005840">
    <property type="term" value="C:ribosome"/>
    <property type="evidence" value="ECO:0007669"/>
    <property type="project" value="UniProtKB-KW"/>
</dbReference>
<dbReference type="GO" id="GO:0003735">
    <property type="term" value="F:structural constituent of ribosome"/>
    <property type="evidence" value="ECO:0007669"/>
    <property type="project" value="InterPro"/>
</dbReference>
<dbReference type="GO" id="GO:0006412">
    <property type="term" value="P:translation"/>
    <property type="evidence" value="ECO:0007669"/>
    <property type="project" value="UniProtKB-UniRule"/>
</dbReference>
<dbReference type="HAMAP" id="MF_00251">
    <property type="entry name" value="Ribosomal_bL36"/>
    <property type="match status" value="1"/>
</dbReference>
<dbReference type="InterPro" id="IPR000473">
    <property type="entry name" value="Ribosomal_bL36"/>
</dbReference>
<dbReference type="InterPro" id="IPR035977">
    <property type="entry name" value="Ribosomal_bL36_sp"/>
</dbReference>
<dbReference type="InterPro" id="IPR047621">
    <property type="entry name" value="Ribosomal_L36_bact"/>
</dbReference>
<dbReference type="NCBIfam" id="NF002021">
    <property type="entry name" value="PRK00831.1"/>
    <property type="match status" value="1"/>
</dbReference>
<dbReference type="NCBIfam" id="TIGR01022">
    <property type="entry name" value="rpmJ_bact"/>
    <property type="match status" value="1"/>
</dbReference>
<dbReference type="PANTHER" id="PTHR47781">
    <property type="entry name" value="50S RIBOSOMAL PROTEIN L36 2"/>
    <property type="match status" value="1"/>
</dbReference>
<dbReference type="PANTHER" id="PTHR47781:SF1">
    <property type="entry name" value="LARGE RIBOSOMAL SUBUNIT PROTEIN BL36B"/>
    <property type="match status" value="1"/>
</dbReference>
<dbReference type="Pfam" id="PF00444">
    <property type="entry name" value="Ribosomal_L36"/>
    <property type="match status" value="1"/>
</dbReference>
<dbReference type="SUPFAM" id="SSF57840">
    <property type="entry name" value="Ribosomal protein L36"/>
    <property type="match status" value="1"/>
</dbReference>
<dbReference type="PROSITE" id="PS00828">
    <property type="entry name" value="RIBOSOMAL_L36"/>
    <property type="match status" value="1"/>
</dbReference>
<sequence>MKVLSSLKSAKTRHRDCKVIRRRGKIFVICKSNPRFKARQR</sequence>
<accession>B0U3S9</accession>
<proteinExistence type="inferred from homology"/>
<evidence type="ECO:0000255" key="1">
    <source>
        <dbReference type="HAMAP-Rule" id="MF_00251"/>
    </source>
</evidence>
<evidence type="ECO:0000305" key="2"/>
<protein>
    <recommendedName>
        <fullName evidence="1">Large ribosomal subunit protein bL36</fullName>
    </recommendedName>
    <alternativeName>
        <fullName evidence="2">50S ribosomal protein L36</fullName>
    </alternativeName>
</protein>
<reference key="1">
    <citation type="journal article" date="2010" name="J. Bacteriol.">
        <title>Whole genome sequences of two Xylella fastidiosa strains (M12 and M23) causing almond leaf scorch disease in California.</title>
        <authorList>
            <person name="Chen J."/>
            <person name="Xie G."/>
            <person name="Han S."/>
            <person name="Chertkov O."/>
            <person name="Sims D."/>
            <person name="Civerolo E.L."/>
        </authorList>
    </citation>
    <scope>NUCLEOTIDE SEQUENCE [LARGE SCALE GENOMIC DNA]</scope>
    <source>
        <strain>M12</strain>
    </source>
</reference>
<name>RL36_XYLFM</name>
<gene>
    <name evidence="1" type="primary">rpmJ</name>
    <name type="ordered locus">Xfasm12_1599</name>
</gene>
<comment type="similarity">
    <text evidence="1">Belongs to the bacterial ribosomal protein bL36 family.</text>
</comment>
<keyword id="KW-0687">Ribonucleoprotein</keyword>
<keyword id="KW-0689">Ribosomal protein</keyword>
<feature type="chain" id="PRO_1000101087" description="Large ribosomal subunit protein bL36">
    <location>
        <begin position="1"/>
        <end position="41"/>
    </location>
</feature>
<organism>
    <name type="scientific">Xylella fastidiosa (strain M12)</name>
    <dbReference type="NCBI Taxonomy" id="405440"/>
    <lineage>
        <taxon>Bacteria</taxon>
        <taxon>Pseudomonadati</taxon>
        <taxon>Pseudomonadota</taxon>
        <taxon>Gammaproteobacteria</taxon>
        <taxon>Lysobacterales</taxon>
        <taxon>Lysobacteraceae</taxon>
        <taxon>Xylella</taxon>
    </lineage>
</organism>